<dbReference type="EC" id="5.4.2.12" evidence="1"/>
<dbReference type="EMBL" id="CP001398">
    <property type="protein sequence ID" value="ACS33233.1"/>
    <property type="molecule type" value="Genomic_DNA"/>
</dbReference>
<dbReference type="RefSeq" id="WP_015858351.1">
    <property type="nucleotide sequence ID" value="NC_012804.1"/>
</dbReference>
<dbReference type="SMR" id="C5A4S1"/>
<dbReference type="STRING" id="593117.TGAM_0731"/>
<dbReference type="PaxDb" id="593117-TGAM_0731"/>
<dbReference type="GeneID" id="7987705"/>
<dbReference type="KEGG" id="tga:TGAM_0731"/>
<dbReference type="PATRIC" id="fig|593117.10.peg.731"/>
<dbReference type="eggNOG" id="arCOG01696">
    <property type="taxonomic scope" value="Archaea"/>
</dbReference>
<dbReference type="HOGENOM" id="CLU_034906_2_0_2"/>
<dbReference type="OrthoDB" id="52918at2157"/>
<dbReference type="UniPathway" id="UPA00109">
    <property type="reaction ID" value="UER00186"/>
</dbReference>
<dbReference type="Proteomes" id="UP000001488">
    <property type="component" value="Chromosome"/>
</dbReference>
<dbReference type="GO" id="GO:0046872">
    <property type="term" value="F:metal ion binding"/>
    <property type="evidence" value="ECO:0007669"/>
    <property type="project" value="InterPro"/>
</dbReference>
<dbReference type="GO" id="GO:0004619">
    <property type="term" value="F:phosphoglycerate mutase activity"/>
    <property type="evidence" value="ECO:0007669"/>
    <property type="project" value="UniProtKB-EC"/>
</dbReference>
<dbReference type="GO" id="GO:0006096">
    <property type="term" value="P:glycolytic process"/>
    <property type="evidence" value="ECO:0007669"/>
    <property type="project" value="UniProtKB-UniRule"/>
</dbReference>
<dbReference type="CDD" id="cd16011">
    <property type="entry name" value="iPGM_like"/>
    <property type="match status" value="1"/>
</dbReference>
<dbReference type="Gene3D" id="3.40.720.10">
    <property type="entry name" value="Alkaline Phosphatase, subunit A"/>
    <property type="match status" value="1"/>
</dbReference>
<dbReference type="Gene3D" id="3.30.70.2130">
    <property type="entry name" value="Metalloenzyme domain"/>
    <property type="match status" value="1"/>
</dbReference>
<dbReference type="HAMAP" id="MF_01402_A">
    <property type="entry name" value="ApgM_A"/>
    <property type="match status" value="1"/>
</dbReference>
<dbReference type="InterPro" id="IPR017850">
    <property type="entry name" value="Alkaline_phosphatase_core_sf"/>
</dbReference>
<dbReference type="InterPro" id="IPR023665">
    <property type="entry name" value="ApgAM_prokaryotes"/>
</dbReference>
<dbReference type="InterPro" id="IPR006124">
    <property type="entry name" value="Metalloenzyme"/>
</dbReference>
<dbReference type="InterPro" id="IPR004456">
    <property type="entry name" value="Pglycerate_mutase_ApgM"/>
</dbReference>
<dbReference type="InterPro" id="IPR042253">
    <property type="entry name" value="Pglycerate_mutase_ApgM_sf"/>
</dbReference>
<dbReference type="NCBIfam" id="TIGR00306">
    <property type="entry name" value="apgM"/>
    <property type="match status" value="1"/>
</dbReference>
<dbReference type="NCBIfam" id="NF003104">
    <property type="entry name" value="PRK04024.1"/>
    <property type="match status" value="1"/>
</dbReference>
<dbReference type="PANTHER" id="PTHR31209">
    <property type="entry name" value="COFACTOR-INDEPENDENT PHOSPHOGLYCERATE MUTASE"/>
    <property type="match status" value="1"/>
</dbReference>
<dbReference type="PANTHER" id="PTHR31209:SF0">
    <property type="entry name" value="METALLOENZYME DOMAIN-CONTAINING PROTEIN"/>
    <property type="match status" value="1"/>
</dbReference>
<dbReference type="Pfam" id="PF01676">
    <property type="entry name" value="Metalloenzyme"/>
    <property type="match status" value="1"/>
</dbReference>
<dbReference type="Pfam" id="PF10143">
    <property type="entry name" value="PhosphMutase"/>
    <property type="match status" value="1"/>
</dbReference>
<dbReference type="PIRSF" id="PIRSF006392">
    <property type="entry name" value="IPGAM_arch"/>
    <property type="match status" value="1"/>
</dbReference>
<dbReference type="SUPFAM" id="SSF53649">
    <property type="entry name" value="Alkaline phosphatase-like"/>
    <property type="match status" value="1"/>
</dbReference>
<accession>C5A4S1</accession>
<comment type="function">
    <text evidence="1">Catalyzes the interconversion of 2-phosphoglycerate and 3-phosphoglycerate.</text>
</comment>
<comment type="catalytic activity">
    <reaction evidence="1">
        <text>(2R)-2-phosphoglycerate = (2R)-3-phosphoglycerate</text>
        <dbReference type="Rhea" id="RHEA:15901"/>
        <dbReference type="ChEBI" id="CHEBI:58272"/>
        <dbReference type="ChEBI" id="CHEBI:58289"/>
        <dbReference type="EC" id="5.4.2.12"/>
    </reaction>
</comment>
<comment type="pathway">
    <text evidence="1">Carbohydrate degradation; glycolysis; pyruvate from D-glyceraldehyde 3-phosphate: step 3/5.</text>
</comment>
<comment type="similarity">
    <text evidence="1">Belongs to the BPG-independent phosphoglycerate mutase family. A-PGAM subfamily.</text>
</comment>
<sequence>MKKRKGLLIILDGLGDRPIKEFGGKTPLEYAKTPNMDKLAKLGILGQQDPIKPGQPAGSDTAHLSIFGYDPYKVYRGRGFLEALGVGLDLDEDDLAFRVNFATIENGIITDRRAGRISTEEAHELAKAIQENVKLPVDFIFVGATGHRAVLVLKGMAKGYRVGENDPHEAGKPPHRFTWEDEESKRVAEILEEFVRQAHEVLERHPINEKRRKEGKPVANYLLIRGAGTYPDIPMKFTEQWKVRAGAVIAVSLVKGVARAIGFDVYTPEGATGEYNTDEMAKAKKTVELLKEYDFVFLHFKPTDAAGHDNNPKLKAEMIEKADRMIGYIIEHINLEDVVIAITGDHSTPCEVMNHSGDPVPLLIVGGGVRPDHTESFGERECMRGGLGRIRGHDIVPVMMDLMNRSEKFGA</sequence>
<feature type="chain" id="PRO_1000215197" description="2,3-bisphosphoglycerate-independent phosphoglycerate mutase">
    <location>
        <begin position="1"/>
        <end position="411"/>
    </location>
</feature>
<reference key="1">
    <citation type="journal article" date="2007" name="Genome Biol.">
        <title>Genome analysis and genome-wide proteomics of Thermococcus gammatolerans, the most radioresistant organism known amongst the Archaea.</title>
        <authorList>
            <person name="Zivanovic Y."/>
            <person name="Armengaud J."/>
            <person name="Lagorce A."/>
            <person name="Leplat C."/>
            <person name="Guerin P."/>
            <person name="Dutertre M."/>
            <person name="Anthouard V."/>
            <person name="Forterre P."/>
            <person name="Wincker P."/>
            <person name="Confalonieri F."/>
        </authorList>
    </citation>
    <scope>NUCLEOTIDE SEQUENCE [LARGE SCALE GENOMIC DNA]</scope>
    <source>
        <strain>DSM 15229 / JCM 11827 / EJ3</strain>
    </source>
</reference>
<gene>
    <name evidence="1" type="primary">apgM</name>
    <name type="ordered locus">TGAM_0731</name>
</gene>
<name>APGM_THEGJ</name>
<evidence type="ECO:0000255" key="1">
    <source>
        <dbReference type="HAMAP-Rule" id="MF_01402"/>
    </source>
</evidence>
<protein>
    <recommendedName>
        <fullName evidence="1">2,3-bisphosphoglycerate-independent phosphoglycerate mutase</fullName>
        <shortName evidence="1">BPG-independent PGAM</shortName>
        <shortName evidence="1">Phosphoglyceromutase</shortName>
        <shortName evidence="1">aPGAM</shortName>
        <ecNumber evidence="1">5.4.2.12</ecNumber>
    </recommendedName>
</protein>
<keyword id="KW-0324">Glycolysis</keyword>
<keyword id="KW-0413">Isomerase</keyword>
<keyword id="KW-1185">Reference proteome</keyword>
<organism>
    <name type="scientific">Thermococcus gammatolerans (strain DSM 15229 / JCM 11827 / EJ3)</name>
    <dbReference type="NCBI Taxonomy" id="593117"/>
    <lineage>
        <taxon>Archaea</taxon>
        <taxon>Methanobacteriati</taxon>
        <taxon>Methanobacteriota</taxon>
        <taxon>Thermococci</taxon>
        <taxon>Thermococcales</taxon>
        <taxon>Thermococcaceae</taxon>
        <taxon>Thermococcus</taxon>
    </lineage>
</organism>
<proteinExistence type="inferred from homology"/>